<name>RPOB_VESOH</name>
<gene>
    <name evidence="1" type="primary">rpoB</name>
    <name type="ordered locus">COSY_0736</name>
</gene>
<sequence>MAYSFTEKKRIRNNFGSRESILTEPDLLAIQIDSFNSFIQADNKIKQDIGLHNVLQSVFPITAVNGYAQIEYVDYQLKEPKFNVEECKLRGVTFASTLRVKLNLVLFDKNGSTLKKKRKVKQIIEEDVYLGQLPLMTETGTFVINGTERVVVSQLHRSPGVIFEHDKGKTHSSGKILFSSRIIPYRGSWLDFEYDHHEHLYVRIDRRRKLPVTTLLRAMGLSSEDILETFFEKTPVKLKAKSCDLSMLPIHLQRTIAEFDIVVNQHVVVEKGRRITAKHVKLLGKAGIKSINAPLEYLLDKVICADIINKDTGEILISANTITSEEVLELLNTNKVKKIEILYINSSETGAYISDTLRLDETQTEIEARMSIYHVMRPGEPATEDAVNLLFNNLFFKNDRYDLSKVGRMKLNRRLGISRETGEHVLTNDDIIRVIKLLINIKDGNDSVDDIDTLANRRVRAIGEMIENQFRIGLVRVEKAVREGLNLAETDELTPQDLINSKPVSAAVREFFGSSQLSQFMDQVNPLSGVTHKRRISALGPGGLTRERAGFEVRDVHPSHYGRLCPIETPEGPNIGLINTLAVYAKTNSYGFLETPYQIVKNGKVTKEVIYVSAIDEITHTIAQANALVDDRGKLMDDLISCRHKNEFVLVDSSEVTLIDIDSKQISSVAASLIPFLEHDDANRALMGSNMQRQAVPVLKAEKPLVGTGIERVVAKDSRVCVTAKHGGVVEAVDASRIVIRVDSKKTKANELGVDIYNLTKYSRSNQNTCINQKPLVRTGDKITFGDVLADGPSTDMGELALGQNMKIAFMPWNGYNFEDSILISEKVVQEDRYTTIHIEELTAYSRDTKLGPEEITSDIPNVSESALSKLDEVGVVYVGARVKGGDILVGKVTPKSETVLSPEEKLLRAIFGEKANNVKDSSLRIGASKSGVVIDVQVFTRDRVEKDIRALSIDAERLERIKKDIDDEFSIIDGDIFRRIRLKLLGNVLSKAIGDIRIGERLSIKLMKKFDNKDIAKFKVENATVNKEVAVLVKQAKAKKVEFEKFFKKEKAKINEGAELPPGVMKMVKVYVATRKTLQVGDKMAGRHGNKGVISRVSPVEDMPYLADGSTIDIVLNPLGVPSRMNVGQVLEVHLGYAAKGLGYKIAAILDERRPDMVKQIRVFLDKVYNLHGKKEDLTLFSNEEIIELANNLREGVPMATPVFDGIREQDIKSLLRLADLPESGQEQLYDGRTGEPFDRHVTVGYMHMLKLNHLVDDKMHARSTGPYSLVTQQPLSGKAQFGGQRFGEMEVWALEAYGAAHTLREMLTVKSDDVAGRAKMYKSIVDGKNLTESVMPESFNVLVKEIRSLGIDVELEQH</sequence>
<evidence type="ECO:0000255" key="1">
    <source>
        <dbReference type="HAMAP-Rule" id="MF_01321"/>
    </source>
</evidence>
<keyword id="KW-0240">DNA-directed RNA polymerase</keyword>
<keyword id="KW-0548">Nucleotidyltransferase</keyword>
<keyword id="KW-1185">Reference proteome</keyword>
<keyword id="KW-0804">Transcription</keyword>
<keyword id="KW-0808">Transferase</keyword>
<protein>
    <recommendedName>
        <fullName evidence="1">DNA-directed RNA polymerase subunit beta</fullName>
        <shortName evidence="1">RNAP subunit beta</shortName>
        <ecNumber evidence="1">2.7.7.6</ecNumber>
    </recommendedName>
    <alternativeName>
        <fullName evidence="1">RNA polymerase subunit beta</fullName>
    </alternativeName>
    <alternativeName>
        <fullName evidence="1">Transcriptase subunit beta</fullName>
    </alternativeName>
</protein>
<comment type="function">
    <text evidence="1">DNA-dependent RNA polymerase catalyzes the transcription of DNA into RNA using the four ribonucleoside triphosphates as substrates.</text>
</comment>
<comment type="catalytic activity">
    <reaction evidence="1">
        <text>RNA(n) + a ribonucleoside 5'-triphosphate = RNA(n+1) + diphosphate</text>
        <dbReference type="Rhea" id="RHEA:21248"/>
        <dbReference type="Rhea" id="RHEA-COMP:14527"/>
        <dbReference type="Rhea" id="RHEA-COMP:17342"/>
        <dbReference type="ChEBI" id="CHEBI:33019"/>
        <dbReference type="ChEBI" id="CHEBI:61557"/>
        <dbReference type="ChEBI" id="CHEBI:140395"/>
        <dbReference type="EC" id="2.7.7.6"/>
    </reaction>
</comment>
<comment type="subunit">
    <text evidence="1">The RNAP catalytic core consists of 2 alpha, 1 beta, 1 beta' and 1 omega subunit. When a sigma factor is associated with the core the holoenzyme is formed, which can initiate transcription.</text>
</comment>
<comment type="similarity">
    <text evidence="1">Belongs to the RNA polymerase beta chain family.</text>
</comment>
<accession>A5CW25</accession>
<proteinExistence type="inferred from homology"/>
<dbReference type="EC" id="2.7.7.6" evidence="1"/>
<dbReference type="EMBL" id="AP009247">
    <property type="protein sequence ID" value="BAF61848.1"/>
    <property type="molecule type" value="Genomic_DNA"/>
</dbReference>
<dbReference type="RefSeq" id="WP_011930118.1">
    <property type="nucleotide sequence ID" value="NC_009465.1"/>
</dbReference>
<dbReference type="SMR" id="A5CW25"/>
<dbReference type="STRING" id="412965.COSY_0736"/>
<dbReference type="KEGG" id="vok:COSY_0736"/>
<dbReference type="eggNOG" id="COG0085">
    <property type="taxonomic scope" value="Bacteria"/>
</dbReference>
<dbReference type="HOGENOM" id="CLU_000524_4_3_6"/>
<dbReference type="OrthoDB" id="9803954at2"/>
<dbReference type="Proteomes" id="UP000000247">
    <property type="component" value="Chromosome"/>
</dbReference>
<dbReference type="GO" id="GO:0000428">
    <property type="term" value="C:DNA-directed RNA polymerase complex"/>
    <property type="evidence" value="ECO:0007669"/>
    <property type="project" value="UniProtKB-KW"/>
</dbReference>
<dbReference type="GO" id="GO:0003677">
    <property type="term" value="F:DNA binding"/>
    <property type="evidence" value="ECO:0007669"/>
    <property type="project" value="UniProtKB-UniRule"/>
</dbReference>
<dbReference type="GO" id="GO:0003899">
    <property type="term" value="F:DNA-directed RNA polymerase activity"/>
    <property type="evidence" value="ECO:0007669"/>
    <property type="project" value="UniProtKB-UniRule"/>
</dbReference>
<dbReference type="GO" id="GO:0032549">
    <property type="term" value="F:ribonucleoside binding"/>
    <property type="evidence" value="ECO:0007669"/>
    <property type="project" value="InterPro"/>
</dbReference>
<dbReference type="GO" id="GO:0006351">
    <property type="term" value="P:DNA-templated transcription"/>
    <property type="evidence" value="ECO:0007669"/>
    <property type="project" value="UniProtKB-UniRule"/>
</dbReference>
<dbReference type="CDD" id="cd00653">
    <property type="entry name" value="RNA_pol_B_RPB2"/>
    <property type="match status" value="1"/>
</dbReference>
<dbReference type="FunFam" id="2.40.270.10:FF:000003">
    <property type="entry name" value="DNA-directed RNA polymerase subunit beta"/>
    <property type="match status" value="1"/>
</dbReference>
<dbReference type="FunFam" id="2.40.50.100:FF:000006">
    <property type="entry name" value="DNA-directed RNA polymerase subunit beta"/>
    <property type="match status" value="1"/>
</dbReference>
<dbReference type="FunFam" id="3.90.1800.10:FF:000001">
    <property type="entry name" value="DNA-directed RNA polymerase subunit beta"/>
    <property type="match status" value="1"/>
</dbReference>
<dbReference type="Gene3D" id="2.40.50.100">
    <property type="match status" value="1"/>
</dbReference>
<dbReference type="Gene3D" id="2.40.50.150">
    <property type="match status" value="1"/>
</dbReference>
<dbReference type="Gene3D" id="3.90.1100.10">
    <property type="match status" value="2"/>
</dbReference>
<dbReference type="Gene3D" id="2.30.150.10">
    <property type="entry name" value="DNA-directed RNA polymerase, beta subunit, external 1 domain"/>
    <property type="match status" value="1"/>
</dbReference>
<dbReference type="Gene3D" id="2.40.270.10">
    <property type="entry name" value="DNA-directed RNA polymerase, subunit 2, domain 6"/>
    <property type="match status" value="1"/>
</dbReference>
<dbReference type="Gene3D" id="3.90.1800.10">
    <property type="entry name" value="RNA polymerase alpha subunit dimerisation domain"/>
    <property type="match status" value="1"/>
</dbReference>
<dbReference type="Gene3D" id="3.90.1110.10">
    <property type="entry name" value="RNA polymerase Rpb2, domain 2"/>
    <property type="match status" value="1"/>
</dbReference>
<dbReference type="HAMAP" id="MF_01321">
    <property type="entry name" value="RNApol_bact_RpoB"/>
    <property type="match status" value="1"/>
</dbReference>
<dbReference type="InterPro" id="IPR042107">
    <property type="entry name" value="DNA-dir_RNA_pol_bsu_ext_1_sf"/>
</dbReference>
<dbReference type="InterPro" id="IPR019462">
    <property type="entry name" value="DNA-dir_RNA_pol_bsu_external_1"/>
</dbReference>
<dbReference type="InterPro" id="IPR015712">
    <property type="entry name" value="DNA-dir_RNA_pol_su2"/>
</dbReference>
<dbReference type="InterPro" id="IPR007120">
    <property type="entry name" value="DNA-dir_RNAP_su2_dom"/>
</dbReference>
<dbReference type="InterPro" id="IPR037033">
    <property type="entry name" value="DNA-dir_RNAP_su2_hyb_sf"/>
</dbReference>
<dbReference type="InterPro" id="IPR010243">
    <property type="entry name" value="RNA_pol_bsu_bac"/>
</dbReference>
<dbReference type="InterPro" id="IPR007121">
    <property type="entry name" value="RNA_pol_bsu_CS"/>
</dbReference>
<dbReference type="InterPro" id="IPR007644">
    <property type="entry name" value="RNA_pol_bsu_protrusion"/>
</dbReference>
<dbReference type="InterPro" id="IPR007642">
    <property type="entry name" value="RNA_pol_Rpb2_2"/>
</dbReference>
<dbReference type="InterPro" id="IPR037034">
    <property type="entry name" value="RNA_pol_Rpb2_2_sf"/>
</dbReference>
<dbReference type="InterPro" id="IPR007645">
    <property type="entry name" value="RNA_pol_Rpb2_3"/>
</dbReference>
<dbReference type="InterPro" id="IPR007641">
    <property type="entry name" value="RNA_pol_Rpb2_7"/>
</dbReference>
<dbReference type="InterPro" id="IPR014724">
    <property type="entry name" value="RNA_pol_RPB2_OB-fold"/>
</dbReference>
<dbReference type="NCBIfam" id="NF001616">
    <property type="entry name" value="PRK00405.1"/>
    <property type="match status" value="1"/>
</dbReference>
<dbReference type="NCBIfam" id="TIGR02013">
    <property type="entry name" value="rpoB"/>
    <property type="match status" value="1"/>
</dbReference>
<dbReference type="PANTHER" id="PTHR20856">
    <property type="entry name" value="DNA-DIRECTED RNA POLYMERASE I SUBUNIT 2"/>
    <property type="match status" value="1"/>
</dbReference>
<dbReference type="Pfam" id="PF04563">
    <property type="entry name" value="RNA_pol_Rpb2_1"/>
    <property type="match status" value="1"/>
</dbReference>
<dbReference type="Pfam" id="PF04561">
    <property type="entry name" value="RNA_pol_Rpb2_2"/>
    <property type="match status" value="2"/>
</dbReference>
<dbReference type="Pfam" id="PF04565">
    <property type="entry name" value="RNA_pol_Rpb2_3"/>
    <property type="match status" value="1"/>
</dbReference>
<dbReference type="Pfam" id="PF10385">
    <property type="entry name" value="RNA_pol_Rpb2_45"/>
    <property type="match status" value="1"/>
</dbReference>
<dbReference type="Pfam" id="PF00562">
    <property type="entry name" value="RNA_pol_Rpb2_6"/>
    <property type="match status" value="1"/>
</dbReference>
<dbReference type="Pfam" id="PF04560">
    <property type="entry name" value="RNA_pol_Rpb2_7"/>
    <property type="match status" value="1"/>
</dbReference>
<dbReference type="SUPFAM" id="SSF64484">
    <property type="entry name" value="beta and beta-prime subunits of DNA dependent RNA-polymerase"/>
    <property type="match status" value="1"/>
</dbReference>
<dbReference type="PROSITE" id="PS01166">
    <property type="entry name" value="RNA_POL_BETA"/>
    <property type="match status" value="1"/>
</dbReference>
<organism>
    <name type="scientific">Vesicomyosocius okutanii subsp. Calyptogena okutanii (strain HA)</name>
    <dbReference type="NCBI Taxonomy" id="412965"/>
    <lineage>
        <taxon>Bacteria</taxon>
        <taxon>Pseudomonadati</taxon>
        <taxon>Pseudomonadota</taxon>
        <taxon>Gammaproteobacteria</taxon>
        <taxon>Candidatus Pseudothioglobaceae</taxon>
        <taxon>Candidatus Vesicomyosocius</taxon>
    </lineage>
</organism>
<feature type="chain" id="PRO_0000300424" description="DNA-directed RNA polymerase subunit beta">
    <location>
        <begin position="1"/>
        <end position="1360"/>
    </location>
</feature>
<reference key="1">
    <citation type="journal article" date="2007" name="Curr. Biol.">
        <title>Reduced genome of the thioautotrophic intracellular symbiont in a deep-sea clam, Calyptogena okutanii.</title>
        <authorList>
            <person name="Kuwahara H."/>
            <person name="Yoshida T."/>
            <person name="Takaki Y."/>
            <person name="Shimamura S."/>
            <person name="Nishi S."/>
            <person name="Harada M."/>
            <person name="Matsuyama K."/>
            <person name="Takishita K."/>
            <person name="Kawato M."/>
            <person name="Uematsu K."/>
            <person name="Fujiwara Y."/>
            <person name="Sato T."/>
            <person name="Kato C."/>
            <person name="Kitagawa M."/>
            <person name="Kato I."/>
            <person name="Maruyama T."/>
        </authorList>
    </citation>
    <scope>NUCLEOTIDE SEQUENCE [LARGE SCALE GENOMIC DNA]</scope>
    <source>
        <strain>HA</strain>
    </source>
</reference>